<feature type="chain" id="PRO_0000123894" description="Aromatic-amino-acid aminotransferase">
    <location>
        <begin position="1"/>
        <end position="394"/>
    </location>
</feature>
<feature type="binding site">
    <location>
        <position position="34"/>
    </location>
    <ligand>
        <name>substrate</name>
    </ligand>
</feature>
<feature type="binding site">
    <location>
        <position position="65"/>
    </location>
    <ligand>
        <name>substrate</name>
    </ligand>
</feature>
<feature type="binding site">
    <location>
        <position position="127"/>
    </location>
    <ligand>
        <name>substrate</name>
    </ligand>
</feature>
<feature type="binding site">
    <location>
        <position position="180"/>
    </location>
    <ligand>
        <name>substrate</name>
    </ligand>
</feature>
<feature type="binding site">
    <location>
        <position position="371"/>
    </location>
    <ligand>
        <name>substrate</name>
    </ligand>
</feature>
<feature type="modified residue" description="N6-(pyridoxal phosphate)lysine">
    <location>
        <position position="243"/>
    </location>
</feature>
<feature type="helix" evidence="3">
    <location>
        <begin position="2"/>
        <end position="4"/>
    </location>
</feature>
<feature type="helix" evidence="3">
    <location>
        <begin position="13"/>
        <end position="22"/>
    </location>
</feature>
<feature type="helix" evidence="3">
    <location>
        <begin position="47"/>
        <end position="59"/>
    </location>
</feature>
<feature type="helix" evidence="3">
    <location>
        <begin position="72"/>
        <end position="83"/>
    </location>
</feature>
<feature type="helix" evidence="3">
    <location>
        <begin position="84"/>
        <end position="86"/>
    </location>
</feature>
<feature type="helix" evidence="3">
    <location>
        <begin position="89"/>
        <end position="91"/>
    </location>
</feature>
<feature type="strand" evidence="3">
    <location>
        <begin position="92"/>
        <end position="98"/>
    </location>
</feature>
<feature type="helix" evidence="3">
    <location>
        <begin position="99"/>
        <end position="114"/>
    </location>
</feature>
<feature type="strand" evidence="3">
    <location>
        <begin position="120"/>
        <end position="125"/>
    </location>
</feature>
<feature type="helix" evidence="3">
    <location>
        <begin position="128"/>
        <end position="137"/>
    </location>
</feature>
<feature type="strand" evidence="3">
    <location>
        <begin position="141"/>
        <end position="145"/>
    </location>
</feature>
<feature type="turn" evidence="3">
    <location>
        <begin position="149"/>
        <end position="152"/>
    </location>
</feature>
<feature type="helix" evidence="3">
    <location>
        <begin position="156"/>
        <end position="164"/>
    </location>
</feature>
<feature type="strand" evidence="3">
    <location>
        <begin position="171"/>
        <end position="178"/>
    </location>
</feature>
<feature type="turn" evidence="3">
    <location>
        <begin position="180"/>
        <end position="182"/>
    </location>
</feature>
<feature type="helix" evidence="3">
    <location>
        <begin position="188"/>
        <end position="201"/>
    </location>
</feature>
<feature type="strand" evidence="3">
    <location>
        <begin position="204"/>
        <end position="209"/>
    </location>
</feature>
<feature type="strand" evidence="3">
    <location>
        <begin position="214"/>
        <end position="216"/>
    </location>
</feature>
<feature type="helix" evidence="3">
    <location>
        <begin position="218"/>
        <end position="231"/>
    </location>
</feature>
<feature type="strand" evidence="3">
    <location>
        <begin position="233"/>
        <end position="240"/>
    </location>
</feature>
<feature type="turn" evidence="3">
    <location>
        <begin position="242"/>
        <end position="246"/>
    </location>
</feature>
<feature type="helix" evidence="3">
    <location>
        <begin position="248"/>
        <end position="250"/>
    </location>
</feature>
<feature type="strand" evidence="3">
    <location>
        <begin position="252"/>
        <end position="258"/>
    </location>
</feature>
<feature type="helix" evidence="3">
    <location>
        <begin position="262"/>
        <end position="277"/>
    </location>
</feature>
<feature type="strand" evidence="3">
    <location>
        <begin position="280"/>
        <end position="282"/>
    </location>
</feature>
<feature type="helix" evidence="3">
    <location>
        <begin position="286"/>
        <end position="296"/>
    </location>
</feature>
<feature type="helix" evidence="3">
    <location>
        <begin position="298"/>
        <end position="330"/>
    </location>
</feature>
<feature type="strand" evidence="4">
    <location>
        <begin position="331"/>
        <end position="333"/>
    </location>
</feature>
<feature type="turn" evidence="3">
    <location>
        <begin position="334"/>
        <end position="336"/>
    </location>
</feature>
<feature type="helix" evidence="3">
    <location>
        <begin position="337"/>
        <end position="340"/>
    </location>
</feature>
<feature type="strand" evidence="3">
    <location>
        <begin position="343"/>
        <end position="347"/>
    </location>
</feature>
<feature type="helix" evidence="3">
    <location>
        <begin position="352"/>
        <end position="362"/>
    </location>
</feature>
<feature type="strand" evidence="3">
    <location>
        <begin position="371"/>
        <end position="373"/>
    </location>
</feature>
<feature type="helix" evidence="3">
    <location>
        <begin position="374"/>
        <end position="376"/>
    </location>
</feature>
<feature type="turn" evidence="3">
    <location>
        <begin position="379"/>
        <end position="381"/>
    </location>
</feature>
<feature type="helix" evidence="3">
    <location>
        <begin position="382"/>
        <end position="392"/>
    </location>
</feature>
<evidence type="ECO:0000269" key="1">
    <source>
    </source>
</evidence>
<evidence type="ECO:0000305" key="2"/>
<evidence type="ECO:0007829" key="3">
    <source>
        <dbReference type="PDB" id="2AY1"/>
    </source>
</evidence>
<evidence type="ECO:0007829" key="4">
    <source>
        <dbReference type="PDB" id="2AY9"/>
    </source>
</evidence>
<comment type="function">
    <text>Shows activities toward both dicarboxylic and aromatic substrates.</text>
</comment>
<comment type="catalytic activity">
    <reaction>
        <text>an aromatic L-alpha-amino acid + 2-oxoglutarate = an aromatic oxo-acid + L-glutamate</text>
        <dbReference type="Rhea" id="RHEA:17533"/>
        <dbReference type="ChEBI" id="CHEBI:16810"/>
        <dbReference type="ChEBI" id="CHEBI:29985"/>
        <dbReference type="ChEBI" id="CHEBI:73309"/>
        <dbReference type="ChEBI" id="CHEBI:84824"/>
        <dbReference type="EC" id="2.6.1.57"/>
    </reaction>
</comment>
<comment type="cofactor">
    <cofactor>
        <name>pyridoxal 5'-phosphate</name>
        <dbReference type="ChEBI" id="CHEBI:597326"/>
    </cofactor>
</comment>
<comment type="subunit">
    <text evidence="1">Homodimer.</text>
</comment>
<comment type="subcellular location">
    <subcellularLocation>
        <location>Cytoplasm</location>
    </subcellularLocation>
</comment>
<comment type="similarity">
    <text evidence="2">Belongs to the class-I pyridoxal-phosphate-dependent aminotransferase family.</text>
</comment>
<protein>
    <recommendedName>
        <fullName>Aromatic-amino-acid aminotransferase</fullName>
        <shortName>ARAT</shortName>
        <shortName>AROAT</shortName>
        <ecNumber>2.6.1.57</ecNumber>
    </recommendedName>
</protein>
<accession>P95468</accession>
<gene>
    <name type="primary">tyrB</name>
</gene>
<organism>
    <name type="scientific">Paracoccus denitrificans</name>
    <dbReference type="NCBI Taxonomy" id="266"/>
    <lineage>
        <taxon>Bacteria</taxon>
        <taxon>Pseudomonadati</taxon>
        <taxon>Pseudomonadota</taxon>
        <taxon>Alphaproteobacteria</taxon>
        <taxon>Rhodobacterales</taxon>
        <taxon>Paracoccaceae</taxon>
        <taxon>Paracoccus</taxon>
    </lineage>
</organism>
<proteinExistence type="evidence at protein level"/>
<keyword id="KW-0002">3D-structure</keyword>
<keyword id="KW-0028">Amino-acid biosynthesis</keyword>
<keyword id="KW-0032">Aminotransferase</keyword>
<keyword id="KW-0057">Aromatic amino acid biosynthesis</keyword>
<keyword id="KW-0963">Cytoplasm</keyword>
<keyword id="KW-0663">Pyridoxal phosphate</keyword>
<keyword id="KW-0808">Transferase</keyword>
<name>TYRB_PARDE</name>
<dbReference type="EC" id="2.6.1.57"/>
<dbReference type="EMBL" id="Y08272">
    <property type="protein sequence ID" value="CAA69597.1"/>
    <property type="molecule type" value="Genomic_DNA"/>
</dbReference>
<dbReference type="PIR" id="JC5197">
    <property type="entry name" value="JC5197"/>
</dbReference>
<dbReference type="RefSeq" id="WP_011746975.1">
    <property type="nucleotide sequence ID" value="NZ_PPGA01000002.1"/>
</dbReference>
<dbReference type="PDB" id="1AY4">
    <property type="method" value="X-ray"/>
    <property type="resolution" value="2.33 A"/>
    <property type="chains" value="A/B=1-394"/>
</dbReference>
<dbReference type="PDB" id="1AY5">
    <property type="method" value="X-ray"/>
    <property type="resolution" value="2.50 A"/>
    <property type="chains" value="A/B=1-394"/>
</dbReference>
<dbReference type="PDB" id="1AY8">
    <property type="method" value="X-ray"/>
    <property type="resolution" value="2.30 A"/>
    <property type="chains" value="A/B=1-394"/>
</dbReference>
<dbReference type="PDB" id="2AY1">
    <property type="method" value="X-ray"/>
    <property type="resolution" value="2.20 A"/>
    <property type="chains" value="A/B=1-394"/>
</dbReference>
<dbReference type="PDB" id="2AY2">
    <property type="method" value="X-ray"/>
    <property type="resolution" value="2.40 A"/>
    <property type="chains" value="A/B=1-394"/>
</dbReference>
<dbReference type="PDB" id="2AY3">
    <property type="method" value="X-ray"/>
    <property type="resolution" value="2.40 A"/>
    <property type="chains" value="A/B=1-394"/>
</dbReference>
<dbReference type="PDB" id="2AY4">
    <property type="method" value="X-ray"/>
    <property type="resolution" value="2.20 A"/>
    <property type="chains" value="A/B=1-394"/>
</dbReference>
<dbReference type="PDB" id="2AY5">
    <property type="method" value="X-ray"/>
    <property type="resolution" value="2.40 A"/>
    <property type="chains" value="A/B=1-394"/>
</dbReference>
<dbReference type="PDB" id="2AY6">
    <property type="method" value="X-ray"/>
    <property type="resolution" value="2.20 A"/>
    <property type="chains" value="A/B=1-394"/>
</dbReference>
<dbReference type="PDB" id="2AY7">
    <property type="method" value="X-ray"/>
    <property type="resolution" value="2.40 A"/>
    <property type="chains" value="A/B=1-394"/>
</dbReference>
<dbReference type="PDB" id="2AY8">
    <property type="method" value="X-ray"/>
    <property type="resolution" value="2.20 A"/>
    <property type="chains" value="A/B=1-394"/>
</dbReference>
<dbReference type="PDB" id="2AY9">
    <property type="method" value="X-ray"/>
    <property type="resolution" value="2.50 A"/>
    <property type="chains" value="A/B=1-394"/>
</dbReference>
<dbReference type="PDBsum" id="1AY4"/>
<dbReference type="PDBsum" id="1AY5"/>
<dbReference type="PDBsum" id="1AY8"/>
<dbReference type="PDBsum" id="2AY1"/>
<dbReference type="PDBsum" id="2AY2"/>
<dbReference type="PDBsum" id="2AY3"/>
<dbReference type="PDBsum" id="2AY4"/>
<dbReference type="PDBsum" id="2AY5"/>
<dbReference type="PDBsum" id="2AY6"/>
<dbReference type="PDBsum" id="2AY7"/>
<dbReference type="PDBsum" id="2AY8"/>
<dbReference type="PDBsum" id="2AY9"/>
<dbReference type="SMR" id="P95468"/>
<dbReference type="DrugBank" id="DB04208">
    <property type="generic name" value="3-(3,4-dimethoxyphenyl)propanoic acid"/>
</dbReference>
<dbReference type="DrugBank" id="DB03400">
    <property type="generic name" value="3-(P-Tolyl)Propionic Acid"/>
</dbReference>
<dbReference type="DrugBank" id="DB02740">
    <property type="generic name" value="3-Indolebutyric Acid"/>
</dbReference>
<dbReference type="DrugBank" id="DB02024">
    <property type="generic name" value="3-phenylpropionic acid"/>
</dbReference>
<dbReference type="DrugBank" id="DB02434">
    <property type="generic name" value="4-(2-Thienyl)Butyric Acid"/>
</dbReference>
<dbReference type="DrugBank" id="DB03210">
    <property type="generic name" value="4-Aminohydrocinnamic Acid"/>
</dbReference>
<dbReference type="DrugBank" id="DB04051">
    <property type="generic name" value="5-phenylpentanoic acid"/>
</dbReference>
<dbReference type="DrugBank" id="DB02242">
    <property type="generic name" value="Cyclohexanepropanoic acid"/>
</dbReference>
<dbReference type="DrugBank" id="DB02758">
    <property type="generic name" value="Indolepropionic acid"/>
</dbReference>
<dbReference type="DrugBank" id="DB04299">
    <property type="generic name" value="Maleic acid"/>
</dbReference>
<dbReference type="DrugBank" id="DB06819">
    <property type="generic name" value="Phenylbutyric acid"/>
</dbReference>
<dbReference type="OMA" id="PTWPIHE"/>
<dbReference type="BRENDA" id="2.6.1.57">
    <property type="organism ID" value="3341"/>
</dbReference>
<dbReference type="EvolutionaryTrace" id="P95468"/>
<dbReference type="GO" id="GO:0005829">
    <property type="term" value="C:cytosol"/>
    <property type="evidence" value="ECO:0007669"/>
    <property type="project" value="TreeGrafter"/>
</dbReference>
<dbReference type="GO" id="GO:0042802">
    <property type="term" value="F:identical protein binding"/>
    <property type="evidence" value="ECO:0007669"/>
    <property type="project" value="TreeGrafter"/>
</dbReference>
<dbReference type="GO" id="GO:0004069">
    <property type="term" value="F:L-aspartate:2-oxoglutarate aminotransferase activity"/>
    <property type="evidence" value="ECO:0007669"/>
    <property type="project" value="TreeGrafter"/>
</dbReference>
<dbReference type="GO" id="GO:0004838">
    <property type="term" value="F:L-tyrosine-2-oxoglutarate transaminase activity"/>
    <property type="evidence" value="ECO:0007669"/>
    <property type="project" value="TreeGrafter"/>
</dbReference>
<dbReference type="GO" id="GO:0030170">
    <property type="term" value="F:pyridoxal phosphate binding"/>
    <property type="evidence" value="ECO:0007669"/>
    <property type="project" value="InterPro"/>
</dbReference>
<dbReference type="GO" id="GO:0033585">
    <property type="term" value="P:L-phenylalanine biosynthetic process from chorismate via phenylpyruvate"/>
    <property type="evidence" value="ECO:0007669"/>
    <property type="project" value="TreeGrafter"/>
</dbReference>
<dbReference type="CDD" id="cd00609">
    <property type="entry name" value="AAT_like"/>
    <property type="match status" value="1"/>
</dbReference>
<dbReference type="Gene3D" id="3.90.1150.10">
    <property type="entry name" value="Aspartate Aminotransferase, domain 1"/>
    <property type="match status" value="1"/>
</dbReference>
<dbReference type="Gene3D" id="3.40.640.10">
    <property type="entry name" value="Type I PLP-dependent aspartate aminotransferase-like (Major domain)"/>
    <property type="match status" value="1"/>
</dbReference>
<dbReference type="InterPro" id="IPR004839">
    <property type="entry name" value="Aminotransferase_I/II_large"/>
</dbReference>
<dbReference type="InterPro" id="IPR000796">
    <property type="entry name" value="Asp_trans"/>
</dbReference>
<dbReference type="InterPro" id="IPR015424">
    <property type="entry name" value="PyrdxlP-dep_Trfase"/>
</dbReference>
<dbReference type="InterPro" id="IPR015421">
    <property type="entry name" value="PyrdxlP-dep_Trfase_major"/>
</dbReference>
<dbReference type="InterPro" id="IPR015422">
    <property type="entry name" value="PyrdxlP-dep_Trfase_small"/>
</dbReference>
<dbReference type="NCBIfam" id="NF006719">
    <property type="entry name" value="PRK09257.1"/>
    <property type="match status" value="1"/>
</dbReference>
<dbReference type="PANTHER" id="PTHR11879">
    <property type="entry name" value="ASPARTATE AMINOTRANSFERASE"/>
    <property type="match status" value="1"/>
</dbReference>
<dbReference type="PANTHER" id="PTHR11879:SF22">
    <property type="entry name" value="ASPARTATE AMINOTRANSFERASE, MITOCHONDRIAL"/>
    <property type="match status" value="1"/>
</dbReference>
<dbReference type="Pfam" id="PF00155">
    <property type="entry name" value="Aminotran_1_2"/>
    <property type="match status" value="1"/>
</dbReference>
<dbReference type="PRINTS" id="PR00799">
    <property type="entry name" value="TRANSAMINASE"/>
</dbReference>
<dbReference type="SUPFAM" id="SSF53383">
    <property type="entry name" value="PLP-dependent transferases"/>
    <property type="match status" value="1"/>
</dbReference>
<sequence length="394" mass="42732">MLGNLKPQAPDKILALMGEFRADPRQGKIDLGVGVYKDATGHTPIMRAVHAAEQRMLETETTKTYAGLSGEPEFQKAMGELILGDGLKSETTATLATVGGTGALRQALELARMANPDLRVFVSDPTWPNHVSIMNFMGLPVQTYRYFDAETRGVDFEGMKADLAAAKKGDMVLLHGCCHNPTGANLTLDQWAEIASILEKTGALPLIDLAYQGFGDGLEEDAAGTRLIASRIPEVLIAASCSKNFGIYRERTGCLLALCADAATRELAQGAMAFLNRQTYSFPPFHGAKIVSTVLTTPELRADWMAELEAVRSGMLRLREQLAGELRDLSGSDRFGFVAEHRGMFSRLGATPEQVKRIKEEFGIYMVGDSRINIAGLNDNTIPILARAIIEVGV</sequence>
<reference key="1">
    <citation type="journal article" date="1997" name="J. Biochem.">
        <title>Paracoccus denitrificans aromatic amino acid aminotransferase: a model enzyme for the study of dual substrate recognition mechanism.</title>
        <authorList>
            <person name="Oue S."/>
            <person name="Okamoto A."/>
            <person name="Nakai Y."/>
            <person name="Nakahira M."/>
            <person name="Shibatani T."/>
            <person name="Hayashi H."/>
            <person name="Kagamiyama H."/>
        </authorList>
    </citation>
    <scope>NUCLEOTIDE SEQUENCE [GENOMIC DNA]</scope>
    <source>
        <strain>NBRC 12442</strain>
    </source>
</reference>
<reference key="2">
    <citation type="journal article" date="1998" name="J. Mol. Biol.">
        <title>Crystal structures of Paracoccus denitrificans aromatic amino acid aminotransferase: a substrate recognition site constructed by rearrangement of hydrogen bond network.</title>
        <authorList>
            <person name="Okamoto A."/>
            <person name="Nakai Y."/>
            <person name="Hayashi H."/>
            <person name="Hirotsu K."/>
            <person name="Kagamiyama H."/>
        </authorList>
    </citation>
    <scope>X-RAY CRYSTALLOGRAPHY (2.33 ANGSTROMS) IN COMPLEXES WITH PYRIDOXAL PHOSPHATE AND SUBSTRATE ANALOGS</scope>
    <scope>SUBUNIT</scope>
</reference>
<reference key="3">
    <citation type="journal article" date="1999" name="Biochemistry">
        <title>The active site of Paracoccus denitrificans aromatic amino acid aminotransferase has contrary properties: flexibility and rigidity.</title>
        <authorList>
            <person name="Okamoto A."/>
            <person name="Ishii S."/>
            <person name="Hirotsu K."/>
            <person name="Kagamiyama H."/>
        </authorList>
    </citation>
    <scope>X-RAY CRYSTALLOGRAPHY (2.2 ANGSTROMS) IN COMPLEXES WITH PYRIDOXAL PHOSPHATE AND SUBSTRATE ANALOGS</scope>
    <scope>PYRIDOXAL PHOSPHATE AT LYS-243</scope>
</reference>